<protein>
    <recommendedName>
        <fullName>Pentatricopeptide repeat-containing protein At5g44230</fullName>
    </recommendedName>
</protein>
<proteinExistence type="evidence at transcript level"/>
<name>PP417_ARATH</name>
<sequence length="657" mass="73670">MTVAHSHRFSTAVNPINISLLSKQLLQLGRTSNNSGTFSEISNQKELLVSSLISKLDDCINLNQIKQIHGHVLRKGLDQSCYILTKLIRTLTKLGVPMDPYARRVIEPVQFRNPFLWTAVIRGYAIEGKFDEAIAMYGCMRKEEITPVSFTFSALLKACGTMKDLNLGRQFHAQTFRLRGFCFVYVGNTMIDMYVKCESIDCARKVFDEMPERDVISWTELIAAYARVGNMECAAELFESLPTKDMVAWTAMVTGFAQNAKPQEALEYFDRMEKSGIRADEVTVAGYISACAQLGASKYADRAVQIAQKSGYSPSDHVVIGSALIDMYSKCGNVEEAVNVFMSMNNKNVFTYSSMILGLATHGRAQEALHLFHYMVTQTEIKPNTVTFVGALMACSHSGLVDQGRQVFDSMYQTFGVQPTRDHYTCMVDLLGRTGRLQEALELIKTMSVEPHGGVWGALLGACRIHNNPEIAEIAAEHLFELEPDIIGNYILLSNVYASAGDWGGVLRVRKLIKEKGLKKTPAVSWVVDKNGQMHKFFPGNLNHPMSNKIQDKLEELVERLTVLGYQPDLSSVPYDVSDNAKRLILIQHTEKLALAFSLLTTNRDSTITIMKNLRMCLDCHKFMRLASEVTGKVIIMRDNMRFHHFRSGDCSCGDFW</sequence>
<gene>
    <name type="primary">PCMP-H17</name>
    <name type="ordered locus">At5g44230</name>
    <name type="ORF">MLN1.16</name>
</gene>
<comment type="similarity">
    <text evidence="1">Belongs to the PPR family. PCMP-H subfamily.</text>
</comment>
<comment type="online information" name="Pentatricopeptide repeat proteins">
    <link uri="https://ppr.plantenergy.uwa.edu.au"/>
</comment>
<evidence type="ECO:0000305" key="1"/>
<reference key="1">
    <citation type="journal article" date="1997" name="DNA Res.">
        <title>Structural analysis of Arabidopsis thaliana chromosome 5. I. Sequence features of the 1.6 Mb regions covered by twenty physically assigned P1 clones.</title>
        <authorList>
            <person name="Sato S."/>
            <person name="Kotani H."/>
            <person name="Nakamura Y."/>
            <person name="Kaneko T."/>
            <person name="Asamizu E."/>
            <person name="Fukami M."/>
            <person name="Miyajima N."/>
            <person name="Tabata S."/>
        </authorList>
    </citation>
    <scope>NUCLEOTIDE SEQUENCE [LARGE SCALE GENOMIC DNA]</scope>
    <source>
        <strain>cv. Columbia</strain>
    </source>
</reference>
<reference key="2">
    <citation type="journal article" date="2017" name="Plant J.">
        <title>Araport11: a complete reannotation of the Arabidopsis thaliana reference genome.</title>
        <authorList>
            <person name="Cheng C.Y."/>
            <person name="Krishnakumar V."/>
            <person name="Chan A.P."/>
            <person name="Thibaud-Nissen F."/>
            <person name="Schobel S."/>
            <person name="Town C.D."/>
        </authorList>
    </citation>
    <scope>GENOME REANNOTATION</scope>
    <source>
        <strain>cv. Columbia</strain>
    </source>
</reference>
<reference key="3">
    <citation type="journal article" date="2006" name="Plant Biotechnol. J.">
        <title>Simultaneous high-throughput recombinational cloning of open reading frames in closed and open configurations.</title>
        <authorList>
            <person name="Underwood B.A."/>
            <person name="Vanderhaeghen R."/>
            <person name="Whitford R."/>
            <person name="Town C.D."/>
            <person name="Hilson P."/>
        </authorList>
    </citation>
    <scope>NUCLEOTIDE SEQUENCE [LARGE SCALE MRNA]</scope>
    <source>
        <strain>cv. Columbia</strain>
    </source>
</reference>
<reference key="4">
    <citation type="journal article" date="2000" name="Plant Mol. Biol.">
        <title>In Arabidopsis thaliana, 1% of the genome codes for a novel protein family unique to plants.</title>
        <authorList>
            <person name="Aubourg S."/>
            <person name="Boudet N."/>
            <person name="Kreis M."/>
            <person name="Lecharny A."/>
        </authorList>
    </citation>
    <scope>GENE FAMILY</scope>
</reference>
<reference key="5">
    <citation type="journal article" date="2004" name="Plant Cell">
        <title>Genome-wide analysis of Arabidopsis pentatricopeptide repeat proteins reveals their essential role in organelle biogenesis.</title>
        <authorList>
            <person name="Lurin C."/>
            <person name="Andres C."/>
            <person name="Aubourg S."/>
            <person name="Bellaoui M."/>
            <person name="Bitton F."/>
            <person name="Bruyere C."/>
            <person name="Caboche M."/>
            <person name="Debast C."/>
            <person name="Gualberto J."/>
            <person name="Hoffmann B."/>
            <person name="Lecharny A."/>
            <person name="Le Ret M."/>
            <person name="Martin-Magniette M.-L."/>
            <person name="Mireau H."/>
            <person name="Peeters N."/>
            <person name="Renou J.-P."/>
            <person name="Szurek B."/>
            <person name="Taconnat L."/>
            <person name="Small I."/>
        </authorList>
    </citation>
    <scope>GENE FAMILY</scope>
</reference>
<feature type="chain" id="PRO_0000363554" description="Pentatricopeptide repeat-containing protein At5g44230">
    <location>
        <begin position="1"/>
        <end position="657"/>
    </location>
</feature>
<feature type="repeat" description="PPR 1">
    <location>
        <begin position="45"/>
        <end position="79"/>
    </location>
</feature>
<feature type="repeat" description="PPR 2">
    <location>
        <begin position="80"/>
        <end position="112"/>
    </location>
</feature>
<feature type="repeat" description="PPR 3">
    <location>
        <begin position="113"/>
        <end position="147"/>
    </location>
</feature>
<feature type="repeat" description="PPR 4">
    <location>
        <begin position="148"/>
        <end position="178"/>
    </location>
</feature>
<feature type="repeat" description="PPR 5">
    <location>
        <begin position="183"/>
        <end position="213"/>
    </location>
</feature>
<feature type="repeat" description="PPR 6">
    <location>
        <begin position="214"/>
        <end position="244"/>
    </location>
</feature>
<feature type="repeat" description="PPR 7">
    <location>
        <begin position="245"/>
        <end position="279"/>
    </location>
</feature>
<feature type="repeat" description="PPR 8">
    <location>
        <begin position="280"/>
        <end position="314"/>
    </location>
</feature>
<feature type="repeat" description="PPR 9">
    <location>
        <begin position="317"/>
        <end position="347"/>
    </location>
</feature>
<feature type="repeat" description="PPR 10">
    <location>
        <begin position="348"/>
        <end position="383"/>
    </location>
</feature>
<feature type="repeat" description="PPR 11">
    <location>
        <begin position="384"/>
        <end position="419"/>
    </location>
</feature>
<feature type="repeat" description="PPR 12">
    <location>
        <begin position="420"/>
        <end position="450"/>
    </location>
</feature>
<feature type="region of interest" description="Type E motif">
    <location>
        <begin position="455"/>
        <end position="530"/>
    </location>
</feature>
<feature type="region of interest" description="Type E(+) motif">
    <location>
        <begin position="532"/>
        <end position="562"/>
    </location>
</feature>
<feature type="region of interest" description="Type DYW motif">
    <location>
        <begin position="563"/>
        <end position="657"/>
    </location>
</feature>
<dbReference type="EMBL" id="AB005239">
    <property type="protein sequence ID" value="BAB10990.1"/>
    <property type="molecule type" value="Genomic_DNA"/>
</dbReference>
<dbReference type="EMBL" id="CP002688">
    <property type="protein sequence ID" value="AED95077.1"/>
    <property type="molecule type" value="Genomic_DNA"/>
</dbReference>
<dbReference type="EMBL" id="DQ447037">
    <property type="protein sequence ID" value="ABE66219.1"/>
    <property type="molecule type" value="mRNA"/>
</dbReference>
<dbReference type="RefSeq" id="NP_199236.1">
    <property type="nucleotide sequence ID" value="NM_123790.2"/>
</dbReference>
<dbReference type="SMR" id="Q9FFG8"/>
<dbReference type="FunCoup" id="Q9FFG8">
    <property type="interactions" value="1207"/>
</dbReference>
<dbReference type="STRING" id="3702.Q9FFG8"/>
<dbReference type="PaxDb" id="3702-AT5G44230.1"/>
<dbReference type="ProteomicsDB" id="249298"/>
<dbReference type="EnsemblPlants" id="AT5G44230.1">
    <property type="protein sequence ID" value="AT5G44230.1"/>
    <property type="gene ID" value="AT5G44230"/>
</dbReference>
<dbReference type="GeneID" id="834446"/>
<dbReference type="Gramene" id="AT5G44230.1">
    <property type="protein sequence ID" value="AT5G44230.1"/>
    <property type="gene ID" value="AT5G44230"/>
</dbReference>
<dbReference type="KEGG" id="ath:AT5G44230"/>
<dbReference type="Araport" id="AT5G44230"/>
<dbReference type="TAIR" id="AT5G44230"/>
<dbReference type="eggNOG" id="KOG4197">
    <property type="taxonomic scope" value="Eukaryota"/>
</dbReference>
<dbReference type="HOGENOM" id="CLU_002706_37_2_1"/>
<dbReference type="InParanoid" id="Q9FFG8"/>
<dbReference type="OMA" id="GLDQSCY"/>
<dbReference type="PhylomeDB" id="Q9FFG8"/>
<dbReference type="PRO" id="PR:Q9FFG8"/>
<dbReference type="Proteomes" id="UP000006548">
    <property type="component" value="Chromosome 5"/>
</dbReference>
<dbReference type="ExpressionAtlas" id="Q9FFG8">
    <property type="expression patterns" value="baseline and differential"/>
</dbReference>
<dbReference type="GO" id="GO:0003723">
    <property type="term" value="F:RNA binding"/>
    <property type="evidence" value="ECO:0007669"/>
    <property type="project" value="InterPro"/>
</dbReference>
<dbReference type="GO" id="GO:0008270">
    <property type="term" value="F:zinc ion binding"/>
    <property type="evidence" value="ECO:0007669"/>
    <property type="project" value="InterPro"/>
</dbReference>
<dbReference type="GO" id="GO:0009451">
    <property type="term" value="P:RNA modification"/>
    <property type="evidence" value="ECO:0007669"/>
    <property type="project" value="InterPro"/>
</dbReference>
<dbReference type="FunFam" id="1.25.40.10:FF:001030">
    <property type="entry name" value="Pentatricopeptide repeat-containing protein At1g09190"/>
    <property type="match status" value="1"/>
</dbReference>
<dbReference type="FunFam" id="1.25.40.10:FF:000325">
    <property type="entry name" value="Pentatricopeptide repeat-containing protein At4g14820"/>
    <property type="match status" value="1"/>
</dbReference>
<dbReference type="FunFam" id="1.25.40.10:FF:001027">
    <property type="entry name" value="Pentatricopeptide repeat-containing protein At5g44230"/>
    <property type="match status" value="1"/>
</dbReference>
<dbReference type="Gene3D" id="1.25.40.10">
    <property type="entry name" value="Tetratricopeptide repeat domain"/>
    <property type="match status" value="3"/>
</dbReference>
<dbReference type="InterPro" id="IPR032867">
    <property type="entry name" value="DYW_dom"/>
</dbReference>
<dbReference type="InterPro" id="IPR046848">
    <property type="entry name" value="E_motif"/>
</dbReference>
<dbReference type="InterPro" id="IPR002885">
    <property type="entry name" value="Pentatricopeptide_rpt"/>
</dbReference>
<dbReference type="InterPro" id="IPR046960">
    <property type="entry name" value="PPR_At4g14850-like_plant"/>
</dbReference>
<dbReference type="InterPro" id="IPR011990">
    <property type="entry name" value="TPR-like_helical_dom_sf"/>
</dbReference>
<dbReference type="NCBIfam" id="TIGR00756">
    <property type="entry name" value="PPR"/>
    <property type="match status" value="4"/>
</dbReference>
<dbReference type="PANTHER" id="PTHR47926:SF523">
    <property type="entry name" value="DYW DOMAIN-CONTAINING PROTEIN"/>
    <property type="match status" value="1"/>
</dbReference>
<dbReference type="PANTHER" id="PTHR47926">
    <property type="entry name" value="PENTATRICOPEPTIDE REPEAT-CONTAINING PROTEIN"/>
    <property type="match status" value="1"/>
</dbReference>
<dbReference type="Pfam" id="PF14432">
    <property type="entry name" value="DYW_deaminase"/>
    <property type="match status" value="1"/>
</dbReference>
<dbReference type="Pfam" id="PF20431">
    <property type="entry name" value="E_motif"/>
    <property type="match status" value="1"/>
</dbReference>
<dbReference type="Pfam" id="PF01535">
    <property type="entry name" value="PPR"/>
    <property type="match status" value="3"/>
</dbReference>
<dbReference type="Pfam" id="PF13041">
    <property type="entry name" value="PPR_2"/>
    <property type="match status" value="3"/>
</dbReference>
<dbReference type="SUPFAM" id="SSF48452">
    <property type="entry name" value="TPR-like"/>
    <property type="match status" value="1"/>
</dbReference>
<dbReference type="PROSITE" id="PS51375">
    <property type="entry name" value="PPR"/>
    <property type="match status" value="10"/>
</dbReference>
<keyword id="KW-1185">Reference proteome</keyword>
<keyword id="KW-0677">Repeat</keyword>
<accession>Q9FFG8</accession>
<organism>
    <name type="scientific">Arabidopsis thaliana</name>
    <name type="common">Mouse-ear cress</name>
    <dbReference type="NCBI Taxonomy" id="3702"/>
    <lineage>
        <taxon>Eukaryota</taxon>
        <taxon>Viridiplantae</taxon>
        <taxon>Streptophyta</taxon>
        <taxon>Embryophyta</taxon>
        <taxon>Tracheophyta</taxon>
        <taxon>Spermatophyta</taxon>
        <taxon>Magnoliopsida</taxon>
        <taxon>eudicotyledons</taxon>
        <taxon>Gunneridae</taxon>
        <taxon>Pentapetalae</taxon>
        <taxon>rosids</taxon>
        <taxon>malvids</taxon>
        <taxon>Brassicales</taxon>
        <taxon>Brassicaceae</taxon>
        <taxon>Camelineae</taxon>
        <taxon>Arabidopsis</taxon>
    </lineage>
</organism>